<evidence type="ECO:0000255" key="1">
    <source>
        <dbReference type="HAMAP-Rule" id="MF_00272"/>
    </source>
</evidence>
<evidence type="ECO:0000255" key="2">
    <source>
        <dbReference type="PROSITE-ProRule" id="PRU01066"/>
    </source>
</evidence>
<comment type="function">
    <text evidence="1">The glycine cleavage system catalyzes the degradation of glycine. The H protein shuttles the methylamine group of glycine from the P protein to the T protein.</text>
</comment>
<comment type="cofactor">
    <cofactor evidence="1">
        <name>(R)-lipoate</name>
        <dbReference type="ChEBI" id="CHEBI:83088"/>
    </cofactor>
    <text evidence="1">Binds 1 lipoyl cofactor covalently.</text>
</comment>
<comment type="subunit">
    <text evidence="1">The glycine cleavage system is composed of four proteins: P, T, L and H.</text>
</comment>
<comment type="similarity">
    <text evidence="1">Belongs to the GcvH family.</text>
</comment>
<reference key="1">
    <citation type="journal article" date="2011" name="Appl. Environ. Microbiol.">
        <title>Genomic potential of Marinobacter aquaeolei, a biogeochemical 'opportunitroph'.</title>
        <authorList>
            <person name="Singer E."/>
            <person name="Webb E.A."/>
            <person name="Nelson W.C."/>
            <person name="Heidelberg J.F."/>
            <person name="Ivanova N."/>
            <person name="Pati A."/>
            <person name="Edwards K.J."/>
        </authorList>
    </citation>
    <scope>NUCLEOTIDE SEQUENCE [LARGE SCALE GENOMIC DNA]</scope>
    <source>
        <strain>ATCC 700491 / DSM 11845 / VT8</strain>
    </source>
</reference>
<feature type="chain" id="PRO_1000022197" description="Glycine cleavage system H protein">
    <location>
        <begin position="1"/>
        <end position="130"/>
    </location>
</feature>
<feature type="domain" description="Lipoyl-binding" evidence="2">
    <location>
        <begin position="24"/>
        <end position="106"/>
    </location>
</feature>
<feature type="modified residue" description="N6-lipoyllysine" evidence="1">
    <location>
        <position position="65"/>
    </location>
</feature>
<gene>
    <name evidence="1" type="primary">gcvH</name>
    <name type="ordered locus">Maqu_0811</name>
</gene>
<organism>
    <name type="scientific">Marinobacter nauticus (strain ATCC 700491 / DSM 11845 / VT8)</name>
    <name type="common">Marinobacter aquaeolei</name>
    <dbReference type="NCBI Taxonomy" id="351348"/>
    <lineage>
        <taxon>Bacteria</taxon>
        <taxon>Pseudomonadati</taxon>
        <taxon>Pseudomonadota</taxon>
        <taxon>Gammaproteobacteria</taxon>
        <taxon>Pseudomonadales</taxon>
        <taxon>Marinobacteraceae</taxon>
        <taxon>Marinobacter</taxon>
    </lineage>
</organism>
<protein>
    <recommendedName>
        <fullName evidence="1">Glycine cleavage system H protein</fullName>
    </recommendedName>
</protein>
<dbReference type="EMBL" id="CP000514">
    <property type="protein sequence ID" value="ABM17908.1"/>
    <property type="molecule type" value="Genomic_DNA"/>
</dbReference>
<dbReference type="RefSeq" id="WP_011784330.1">
    <property type="nucleotide sequence ID" value="NC_008740.1"/>
</dbReference>
<dbReference type="SMR" id="A1TYT9"/>
<dbReference type="STRING" id="351348.Maqu_0811"/>
<dbReference type="GeneID" id="31820188"/>
<dbReference type="KEGG" id="maq:Maqu_0811"/>
<dbReference type="eggNOG" id="COG0509">
    <property type="taxonomic scope" value="Bacteria"/>
</dbReference>
<dbReference type="HOGENOM" id="CLU_097408_2_0_6"/>
<dbReference type="OrthoDB" id="9796712at2"/>
<dbReference type="Proteomes" id="UP000000998">
    <property type="component" value="Chromosome"/>
</dbReference>
<dbReference type="GO" id="GO:0005829">
    <property type="term" value="C:cytosol"/>
    <property type="evidence" value="ECO:0007669"/>
    <property type="project" value="TreeGrafter"/>
</dbReference>
<dbReference type="GO" id="GO:0005960">
    <property type="term" value="C:glycine cleavage complex"/>
    <property type="evidence" value="ECO:0007669"/>
    <property type="project" value="InterPro"/>
</dbReference>
<dbReference type="GO" id="GO:0019464">
    <property type="term" value="P:glycine decarboxylation via glycine cleavage system"/>
    <property type="evidence" value="ECO:0007669"/>
    <property type="project" value="UniProtKB-UniRule"/>
</dbReference>
<dbReference type="CDD" id="cd06848">
    <property type="entry name" value="GCS_H"/>
    <property type="match status" value="1"/>
</dbReference>
<dbReference type="Gene3D" id="2.40.50.100">
    <property type="match status" value="1"/>
</dbReference>
<dbReference type="HAMAP" id="MF_00272">
    <property type="entry name" value="GcvH"/>
    <property type="match status" value="1"/>
</dbReference>
<dbReference type="InterPro" id="IPR003016">
    <property type="entry name" value="2-oxoA_DH_lipoyl-BS"/>
</dbReference>
<dbReference type="InterPro" id="IPR000089">
    <property type="entry name" value="Biotin_lipoyl"/>
</dbReference>
<dbReference type="InterPro" id="IPR002930">
    <property type="entry name" value="GCV_H"/>
</dbReference>
<dbReference type="InterPro" id="IPR033753">
    <property type="entry name" value="GCV_H/Fam206"/>
</dbReference>
<dbReference type="InterPro" id="IPR017453">
    <property type="entry name" value="GCV_H_sub"/>
</dbReference>
<dbReference type="InterPro" id="IPR011053">
    <property type="entry name" value="Single_hybrid_motif"/>
</dbReference>
<dbReference type="NCBIfam" id="TIGR00527">
    <property type="entry name" value="gcvH"/>
    <property type="match status" value="1"/>
</dbReference>
<dbReference type="NCBIfam" id="NF002270">
    <property type="entry name" value="PRK01202.1"/>
    <property type="match status" value="1"/>
</dbReference>
<dbReference type="PANTHER" id="PTHR11715">
    <property type="entry name" value="GLYCINE CLEAVAGE SYSTEM H PROTEIN"/>
    <property type="match status" value="1"/>
</dbReference>
<dbReference type="PANTHER" id="PTHR11715:SF3">
    <property type="entry name" value="GLYCINE CLEAVAGE SYSTEM H PROTEIN-RELATED"/>
    <property type="match status" value="1"/>
</dbReference>
<dbReference type="Pfam" id="PF01597">
    <property type="entry name" value="GCV_H"/>
    <property type="match status" value="1"/>
</dbReference>
<dbReference type="SUPFAM" id="SSF51230">
    <property type="entry name" value="Single hybrid motif"/>
    <property type="match status" value="1"/>
</dbReference>
<dbReference type="PROSITE" id="PS50968">
    <property type="entry name" value="BIOTINYL_LIPOYL"/>
    <property type="match status" value="1"/>
</dbReference>
<dbReference type="PROSITE" id="PS00189">
    <property type="entry name" value="LIPOYL"/>
    <property type="match status" value="1"/>
</dbReference>
<proteinExistence type="inferred from homology"/>
<name>GCSH_MARN8</name>
<keyword id="KW-0450">Lipoyl</keyword>
<accession>A1TYT9</accession>
<sequence>MSEIPSDLKYIETHQWVRVDADGTATVGITDFAQEQLGDVVYIGVPEMGATVNGGEEAGVAESVKSASDVFSPVTGEVIEINEKLEDEPEIVNEDPYGDGWMFKVKLADEGELEGLMDAAAYAEHVAAEE</sequence>